<organism>
    <name type="scientific">Actinobacillus pleuropneumoniae serotype 5b (strain L20)</name>
    <dbReference type="NCBI Taxonomy" id="416269"/>
    <lineage>
        <taxon>Bacteria</taxon>
        <taxon>Pseudomonadati</taxon>
        <taxon>Pseudomonadota</taxon>
        <taxon>Gammaproteobacteria</taxon>
        <taxon>Pasteurellales</taxon>
        <taxon>Pasteurellaceae</taxon>
        <taxon>Actinobacillus</taxon>
    </lineage>
</organism>
<evidence type="ECO:0000250" key="1"/>
<evidence type="ECO:0000255" key="2"/>
<evidence type="ECO:0000305" key="3"/>
<protein>
    <recommendedName>
        <fullName>Cell division protein ZapA</fullName>
    </recommendedName>
    <alternativeName>
        <fullName>Z ring-associated protein ZapA</fullName>
    </alternativeName>
</protein>
<feature type="chain" id="PRO_0000346118" description="Cell division protein ZapA">
    <location>
        <begin position="1"/>
        <end position="106"/>
    </location>
</feature>
<feature type="coiled-coil region" evidence="2">
    <location>
        <begin position="22"/>
        <end position="81"/>
    </location>
</feature>
<reference key="1">
    <citation type="journal article" date="2008" name="J. Bacteriol.">
        <title>The complete genome sequence of Actinobacillus pleuropneumoniae L20 (serotype 5b).</title>
        <authorList>
            <person name="Foote S.J."/>
            <person name="Bosse J.T."/>
            <person name="Bouevitch A.B."/>
            <person name="Langford P.R."/>
            <person name="Young N.M."/>
            <person name="Nash J.H.E."/>
        </authorList>
    </citation>
    <scope>NUCLEOTIDE SEQUENCE [LARGE SCALE GENOMIC DNA]</scope>
    <source>
        <strain>L20</strain>
    </source>
</reference>
<accession>A3MYI2</accession>
<proteinExistence type="inferred from homology"/>
<gene>
    <name type="primary">zapA</name>
    <name type="ordered locus">APL_0110</name>
</gene>
<comment type="function">
    <text evidence="1">Activator of cell division through the inhibition of FtsZ GTPase activity, therefore promoting FtsZ assembly into bundles of protofilaments necessary for the formation of the division Z ring. It is recruited early at mid-cell but it is not essential for cell division (By similarity).</text>
</comment>
<comment type="subunit">
    <text evidence="1">Homodimer. Interacts with FtsZ (By similarity).</text>
</comment>
<comment type="subcellular location">
    <subcellularLocation>
        <location evidence="1">Cytoplasm</location>
    </subcellularLocation>
    <text evidence="1">Localizes at mid-cell.</text>
</comment>
<comment type="similarity">
    <text evidence="3">Belongs to the ZapA family. Type 1 subfamily.</text>
</comment>
<sequence length="106" mass="11798">MSANYIEVQIFGQVLRLHCPPDQQENLLASAQRLEERVALLKDQSGIIQLEKVLAIVALNLNYELEQEKQKNANNKAVLESCIHQLDNSLSKLLSGSSVAINQESV</sequence>
<keyword id="KW-0131">Cell cycle</keyword>
<keyword id="KW-0132">Cell division</keyword>
<keyword id="KW-0175">Coiled coil</keyword>
<keyword id="KW-0963">Cytoplasm</keyword>
<keyword id="KW-1185">Reference proteome</keyword>
<keyword id="KW-0717">Septation</keyword>
<dbReference type="EMBL" id="CP000569">
    <property type="protein sequence ID" value="ABN73218.1"/>
    <property type="molecule type" value="Genomic_DNA"/>
</dbReference>
<dbReference type="RefSeq" id="WP_005600115.1">
    <property type="nucleotide sequence ID" value="NC_009053.1"/>
</dbReference>
<dbReference type="SMR" id="A3MYI2"/>
<dbReference type="STRING" id="416269.APL_0110"/>
<dbReference type="EnsemblBacteria" id="ABN73218">
    <property type="protein sequence ID" value="ABN73218"/>
    <property type="gene ID" value="APL_0110"/>
</dbReference>
<dbReference type="KEGG" id="apl:APL_0110"/>
<dbReference type="eggNOG" id="COG3027">
    <property type="taxonomic scope" value="Bacteria"/>
</dbReference>
<dbReference type="HOGENOM" id="CLU_116623_3_0_6"/>
<dbReference type="Proteomes" id="UP000001432">
    <property type="component" value="Chromosome"/>
</dbReference>
<dbReference type="GO" id="GO:0032153">
    <property type="term" value="C:cell division site"/>
    <property type="evidence" value="ECO:0007669"/>
    <property type="project" value="TreeGrafter"/>
</dbReference>
<dbReference type="GO" id="GO:0030428">
    <property type="term" value="C:cell septum"/>
    <property type="evidence" value="ECO:0007669"/>
    <property type="project" value="TreeGrafter"/>
</dbReference>
<dbReference type="GO" id="GO:0005829">
    <property type="term" value="C:cytosol"/>
    <property type="evidence" value="ECO:0007669"/>
    <property type="project" value="TreeGrafter"/>
</dbReference>
<dbReference type="GO" id="GO:0000917">
    <property type="term" value="P:division septum assembly"/>
    <property type="evidence" value="ECO:0007669"/>
    <property type="project" value="UniProtKB-KW"/>
</dbReference>
<dbReference type="GO" id="GO:0043093">
    <property type="term" value="P:FtsZ-dependent cytokinesis"/>
    <property type="evidence" value="ECO:0007669"/>
    <property type="project" value="TreeGrafter"/>
</dbReference>
<dbReference type="GO" id="GO:0000921">
    <property type="term" value="P:septin ring assembly"/>
    <property type="evidence" value="ECO:0007669"/>
    <property type="project" value="TreeGrafter"/>
</dbReference>
<dbReference type="Gene3D" id="3.30.160.880">
    <property type="entry name" value="Cell division protein ZapA protomer, N-terminal domain"/>
    <property type="match status" value="1"/>
</dbReference>
<dbReference type="InterPro" id="IPR007838">
    <property type="entry name" value="Cell_div_ZapA-like"/>
</dbReference>
<dbReference type="InterPro" id="IPR036192">
    <property type="entry name" value="Cell_div_ZapA-like_sf"/>
</dbReference>
<dbReference type="InterPro" id="IPR042233">
    <property type="entry name" value="Cell_div_ZapA_N"/>
</dbReference>
<dbReference type="PANTHER" id="PTHR34981">
    <property type="entry name" value="CELL DIVISION PROTEIN ZAPA"/>
    <property type="match status" value="1"/>
</dbReference>
<dbReference type="PANTHER" id="PTHR34981:SF1">
    <property type="entry name" value="CELL DIVISION PROTEIN ZAPA"/>
    <property type="match status" value="1"/>
</dbReference>
<dbReference type="Pfam" id="PF05164">
    <property type="entry name" value="ZapA"/>
    <property type="match status" value="1"/>
</dbReference>
<dbReference type="SUPFAM" id="SSF102829">
    <property type="entry name" value="Cell division protein ZapA-like"/>
    <property type="match status" value="1"/>
</dbReference>
<name>ZAPA_ACTP2</name>